<keyword id="KW-1017">Isopeptide bond</keyword>
<keyword id="KW-0479">Metal-binding</keyword>
<keyword id="KW-0597">Phosphoprotein</keyword>
<keyword id="KW-1185">Reference proteome</keyword>
<keyword id="KW-0677">Repeat</keyword>
<keyword id="KW-0832">Ubl conjugation</keyword>
<keyword id="KW-0862">Zinc</keyword>
<keyword id="KW-0863">Zinc-finger</keyword>
<evidence type="ECO:0000250" key="1"/>
<evidence type="ECO:0000250" key="2">
    <source>
        <dbReference type="UniProtKB" id="A7XYQ1"/>
    </source>
</evidence>
<evidence type="ECO:0000250" key="3">
    <source>
        <dbReference type="UniProtKB" id="Q0P5V2"/>
    </source>
</evidence>
<evidence type="ECO:0000255" key="4"/>
<evidence type="ECO:0000256" key="5">
    <source>
        <dbReference type="SAM" id="MobiDB-lite"/>
    </source>
</evidence>
<evidence type="ECO:0000312" key="6">
    <source>
        <dbReference type="EMBL" id="ABF56056.1"/>
    </source>
</evidence>
<dbReference type="EMBL" id="DQ503408">
    <property type="protein sequence ID" value="ABF56056.1"/>
    <property type="molecule type" value="mRNA"/>
</dbReference>
<dbReference type="RefSeq" id="NP_001094640.2">
    <property type="nucleotide sequence ID" value="NM_001101170.2"/>
</dbReference>
<dbReference type="FunCoup" id="A7XYH9">
    <property type="interactions" value="826"/>
</dbReference>
<dbReference type="STRING" id="9913.ENSBTAP00000025519"/>
<dbReference type="PaxDb" id="9913-ENSBTAP00000025519"/>
<dbReference type="GeneID" id="537433"/>
<dbReference type="KEGG" id="bta:537433"/>
<dbReference type="CTD" id="55084"/>
<dbReference type="VEuPathDB" id="HostDB:ENSBTAG00000019175"/>
<dbReference type="eggNOG" id="ENOG502QZ8A">
    <property type="taxonomic scope" value="Eukaryota"/>
</dbReference>
<dbReference type="InParanoid" id="A7XYH9"/>
<dbReference type="OMA" id="MAPCVIS"/>
<dbReference type="OrthoDB" id="6250723at2759"/>
<dbReference type="Proteomes" id="UP000009136">
    <property type="component" value="Chromosome 9"/>
</dbReference>
<dbReference type="Bgee" id="ENSBTAG00000019175">
    <property type="expression patterns" value="Expressed in Ammon's horn and 103 other cell types or tissues"/>
</dbReference>
<dbReference type="GO" id="GO:0005634">
    <property type="term" value="C:nucleus"/>
    <property type="evidence" value="ECO:0000318"/>
    <property type="project" value="GO_Central"/>
</dbReference>
<dbReference type="GO" id="GO:0008270">
    <property type="term" value="F:zinc ion binding"/>
    <property type="evidence" value="ECO:0007669"/>
    <property type="project" value="UniProtKB-KW"/>
</dbReference>
<dbReference type="GO" id="GO:0048513">
    <property type="term" value="P:animal organ development"/>
    <property type="evidence" value="ECO:0000318"/>
    <property type="project" value="GO_Central"/>
</dbReference>
<dbReference type="GO" id="GO:0042472">
    <property type="term" value="P:inner ear morphogenesis"/>
    <property type="evidence" value="ECO:0000318"/>
    <property type="project" value="GO_Central"/>
</dbReference>
<dbReference type="InterPro" id="IPR026092">
    <property type="entry name" value="RAI2/SOBP"/>
</dbReference>
<dbReference type="InterPro" id="IPR010507">
    <property type="entry name" value="Znf_MYM"/>
</dbReference>
<dbReference type="PANTHER" id="PTHR23186">
    <property type="entry name" value="RETINOIC ACID-INDUCED PROTEIN 2"/>
    <property type="match status" value="1"/>
</dbReference>
<dbReference type="PANTHER" id="PTHR23186:SF2">
    <property type="entry name" value="SINE OCULIS-BINDING PROTEIN HOMOLOG"/>
    <property type="match status" value="1"/>
</dbReference>
<dbReference type="Pfam" id="PF15279">
    <property type="entry name" value="SOBP"/>
    <property type="match status" value="1"/>
</dbReference>
<dbReference type="Pfam" id="PF06467">
    <property type="entry name" value="zf-FCS"/>
    <property type="match status" value="1"/>
</dbReference>
<feature type="chain" id="PRO_0000312231" description="Sine oculis-binding protein homolog">
    <location>
        <begin position="1"/>
        <end position="872"/>
    </location>
</feature>
<feature type="zinc finger region" description="FCS-type 1" evidence="4">
    <location>
        <begin position="142"/>
        <end position="180"/>
    </location>
</feature>
<feature type="zinc finger region" description="FCS-type 2" evidence="4">
    <location>
        <begin position="216"/>
        <end position="256"/>
    </location>
</feature>
<feature type="region of interest" description="Disordered" evidence="5">
    <location>
        <begin position="1"/>
        <end position="26"/>
    </location>
</feature>
<feature type="region of interest" description="Disordered" evidence="5">
    <location>
        <begin position="308"/>
        <end position="354"/>
    </location>
</feature>
<feature type="region of interest" description="Disordered" evidence="5">
    <location>
        <begin position="411"/>
        <end position="484"/>
    </location>
</feature>
<feature type="region of interest" description="Disordered" evidence="5">
    <location>
        <begin position="550"/>
        <end position="619"/>
    </location>
</feature>
<feature type="region of interest" description="Disordered" evidence="5">
    <location>
        <begin position="728"/>
        <end position="770"/>
    </location>
</feature>
<feature type="short sequence motif" description="SUMO interaction motif 1 (SIM); mediates the binding to polysumoylated substrates" evidence="1">
    <location>
        <begin position="620"/>
        <end position="624"/>
    </location>
</feature>
<feature type="short sequence motif" description="SUMO interaction motif 2 (SIM); mediates the binding to polysumoylated substrates" evidence="1">
    <location>
        <begin position="651"/>
        <end position="655"/>
    </location>
</feature>
<feature type="compositionally biased region" description="Basic and acidic residues" evidence="5">
    <location>
        <begin position="1"/>
        <end position="14"/>
    </location>
</feature>
<feature type="compositionally biased region" description="Polar residues" evidence="5">
    <location>
        <begin position="319"/>
        <end position="344"/>
    </location>
</feature>
<feature type="compositionally biased region" description="Low complexity" evidence="5">
    <location>
        <begin position="417"/>
        <end position="433"/>
    </location>
</feature>
<feature type="compositionally biased region" description="Pro residues" evidence="5">
    <location>
        <begin position="460"/>
        <end position="484"/>
    </location>
</feature>
<feature type="compositionally biased region" description="Pro residues" evidence="5">
    <location>
        <begin position="736"/>
        <end position="753"/>
    </location>
</feature>
<feature type="modified residue" description="Phosphoserine" evidence="3">
    <location>
        <position position="629"/>
    </location>
</feature>
<feature type="modified residue" description="Phosphoserine" evidence="3">
    <location>
        <position position="697"/>
    </location>
</feature>
<feature type="cross-link" description="Glycyl lysine isopeptide (Lys-Gly) (interchain with G-Cter in SUMO2)" evidence="2">
    <location>
        <position position="675"/>
    </location>
</feature>
<proteinExistence type="evidence at transcript level"/>
<protein>
    <recommendedName>
        <fullName>Sine oculis-binding protein homolog</fullName>
    </recommendedName>
    <alternativeName>
        <fullName>Jackson circler protein 1</fullName>
    </alternativeName>
</protein>
<name>SOBP_BOVIN</name>
<organism>
    <name type="scientific">Bos taurus</name>
    <name type="common">Bovine</name>
    <dbReference type="NCBI Taxonomy" id="9913"/>
    <lineage>
        <taxon>Eukaryota</taxon>
        <taxon>Metazoa</taxon>
        <taxon>Chordata</taxon>
        <taxon>Craniata</taxon>
        <taxon>Vertebrata</taxon>
        <taxon>Euteleostomi</taxon>
        <taxon>Mammalia</taxon>
        <taxon>Eutheria</taxon>
        <taxon>Laurasiatheria</taxon>
        <taxon>Artiodactyla</taxon>
        <taxon>Ruminantia</taxon>
        <taxon>Pecora</taxon>
        <taxon>Bovidae</taxon>
        <taxon>Bovinae</taxon>
        <taxon>Bos</taxon>
    </lineage>
</organism>
<gene>
    <name evidence="3" type="primary">SOBP</name>
    <name evidence="6" type="synonym">JXC1</name>
</gene>
<accession>A7XYH9</accession>
<reference evidence="6" key="1">
    <citation type="submission" date="2006-04" db="EMBL/GenBank/DDBJ databases">
        <title>Mutations in Jxc1 are associated with deafness, vestibular deficits and cochlea malformation in the Jackson circler (jc) mutant mouse.</title>
        <authorList>
            <person name="Noben-Trauth K."/>
        </authorList>
    </citation>
    <scope>NUCLEOTIDE SEQUENCE [MRNA]</scope>
</reference>
<comment type="function">
    <text evidence="3">Implicated in development of the cochlea.</text>
</comment>
<comment type="subunit">
    <text evidence="1">Interacts (via SIM domains) with SUMO1 and SUMO2.</text>
</comment>
<comment type="similarity">
    <text evidence="4">Belongs to the SOBP family.</text>
</comment>
<sequence length="872" mass="92469">MAEMEKEGRPPENKRSRKPAHPVKREINEEMKNFAENTMNELLGWYGYDKVELKDGEDIEFRSYPTDGESRQHISVLKENSLPKPKLPEDSVISPYNISTGYSGLATGNGLSDSPAGSKDHGNVPIIVPLIPPPFIKPPAEDDVSNVQIMCAWCQKVGIKRYSLSMGSEVKSFCSEKCFAACRRAYFKRNKARDEDGHAENFPQQHYAKETPRLAFKNNCELLVCDWCKHIRHTKEYLDFGDGERRLQFCSAKCLNQYKMDIFYKETQANLPAGLCSTLHPPMENKTEGTGVQLLTPDSWNIPLTDARRKAPSPVAAAGQSQGPGPSASTTVSPSDTANCSVTKIPTPVPKSMPISETPNIPPVSVQPPASIGPPLGVPPRSPPMVMTNRGPVPLPIFMEQQIMQQLRPPFIRGPPHHASNPNSPLSNPMLPGIGPPPGGPRNLGPTSSPMHRPLLSPHIHPPSTPTMPGNPPGLLPPPPPGAPLPSLPFPPVSMMPNGPMPVPQMMNFGLPSLAPLVPPPTLLVPYPVIVPLPVPIPIPIPVPHVSDSKPPNGFSSNGENFIPSAPGDSSAAGGKPGGHSLSPRDSKQGSSKSADSPPGCSGQALSLAPAPAEHGRSEVVDLTRRAGSPPGAGGQLGFPGGVLQGPQDGVIDLTVGHRARLHNVIHRALHAHVKAEREPGAAERRTCGGCRDGHCSPPAAGDPGPGAPAGPEAAAACNVIVNGTRGAAEGAKGAEPPPEQPPPPPPPPPAPPKKLLSPEEPAVSELESVKENNCASNCHLDGEAAKKLMGEEALAGGDKSDPNLNNPADEDHAYALRMLPKTGCVIQPVPKPAEKAAMAPCIISSPMLSAGPEDLEPPLKRRCLRIRNQNK</sequence>